<dbReference type="EC" id="2.4.2.9" evidence="1"/>
<dbReference type="EMBL" id="CP000875">
    <property type="protein sequence ID" value="ABX06622.1"/>
    <property type="molecule type" value="Genomic_DNA"/>
</dbReference>
<dbReference type="SMR" id="A9AVM2"/>
<dbReference type="FunCoup" id="A9AVM2">
    <property type="interactions" value="202"/>
</dbReference>
<dbReference type="STRING" id="316274.Haur_3990"/>
<dbReference type="KEGG" id="hau:Haur_3990"/>
<dbReference type="eggNOG" id="COG2065">
    <property type="taxonomic scope" value="Bacteria"/>
</dbReference>
<dbReference type="HOGENOM" id="CLU_094234_2_1_0"/>
<dbReference type="InParanoid" id="A9AVM2"/>
<dbReference type="Proteomes" id="UP000000787">
    <property type="component" value="Chromosome"/>
</dbReference>
<dbReference type="GO" id="GO:0004845">
    <property type="term" value="F:uracil phosphoribosyltransferase activity"/>
    <property type="evidence" value="ECO:0007669"/>
    <property type="project" value="UniProtKB-UniRule"/>
</dbReference>
<dbReference type="GO" id="GO:0006355">
    <property type="term" value="P:regulation of DNA-templated transcription"/>
    <property type="evidence" value="ECO:0007669"/>
    <property type="project" value="UniProtKB-UniRule"/>
</dbReference>
<dbReference type="CDD" id="cd06223">
    <property type="entry name" value="PRTases_typeI"/>
    <property type="match status" value="1"/>
</dbReference>
<dbReference type="FunFam" id="3.40.50.2020:FF:000020">
    <property type="entry name" value="Bifunctional protein PyrR"/>
    <property type="match status" value="1"/>
</dbReference>
<dbReference type="Gene3D" id="3.40.50.2020">
    <property type="match status" value="1"/>
</dbReference>
<dbReference type="HAMAP" id="MF_01219">
    <property type="entry name" value="PyrR"/>
    <property type="match status" value="1"/>
</dbReference>
<dbReference type="InterPro" id="IPR000836">
    <property type="entry name" value="PRibTrfase_dom"/>
</dbReference>
<dbReference type="InterPro" id="IPR029057">
    <property type="entry name" value="PRTase-like"/>
</dbReference>
<dbReference type="InterPro" id="IPR023050">
    <property type="entry name" value="PyrR"/>
</dbReference>
<dbReference type="InterPro" id="IPR050137">
    <property type="entry name" value="PyrR_bifunctional"/>
</dbReference>
<dbReference type="NCBIfam" id="NF003545">
    <property type="entry name" value="PRK05205.1-1"/>
    <property type="match status" value="1"/>
</dbReference>
<dbReference type="NCBIfam" id="NF003549">
    <property type="entry name" value="PRK05205.1-5"/>
    <property type="match status" value="1"/>
</dbReference>
<dbReference type="PANTHER" id="PTHR11608">
    <property type="entry name" value="BIFUNCTIONAL PROTEIN PYRR"/>
    <property type="match status" value="1"/>
</dbReference>
<dbReference type="PANTHER" id="PTHR11608:SF0">
    <property type="entry name" value="BIFUNCTIONAL PROTEIN PYRR"/>
    <property type="match status" value="1"/>
</dbReference>
<dbReference type="Pfam" id="PF00156">
    <property type="entry name" value="Pribosyltran"/>
    <property type="match status" value="1"/>
</dbReference>
<dbReference type="SUPFAM" id="SSF53271">
    <property type="entry name" value="PRTase-like"/>
    <property type="match status" value="1"/>
</dbReference>
<organism>
    <name type="scientific">Herpetosiphon aurantiacus (strain ATCC 23779 / DSM 785 / 114-95)</name>
    <dbReference type="NCBI Taxonomy" id="316274"/>
    <lineage>
        <taxon>Bacteria</taxon>
        <taxon>Bacillati</taxon>
        <taxon>Chloroflexota</taxon>
        <taxon>Chloroflexia</taxon>
        <taxon>Herpetosiphonales</taxon>
        <taxon>Herpetosiphonaceae</taxon>
        <taxon>Herpetosiphon</taxon>
    </lineage>
</organism>
<protein>
    <recommendedName>
        <fullName evidence="1">Bifunctional protein PyrR</fullName>
    </recommendedName>
    <domain>
        <recommendedName>
            <fullName evidence="1">Pyrimidine operon regulatory protein</fullName>
        </recommendedName>
    </domain>
    <domain>
        <recommendedName>
            <fullName evidence="1">Uracil phosphoribosyltransferase</fullName>
            <shortName evidence="1">UPRTase</shortName>
            <ecNumber evidence="1">2.4.2.9</ecNumber>
        </recommendedName>
    </domain>
</protein>
<gene>
    <name evidence="1" type="primary">pyrR</name>
    <name type="ordered locus">Haur_3990</name>
</gene>
<evidence type="ECO:0000255" key="1">
    <source>
        <dbReference type="HAMAP-Rule" id="MF_01219"/>
    </source>
</evidence>
<name>PYRR_HERA2</name>
<accession>A9AVM2</accession>
<comment type="function">
    <text evidence="1">Regulates the transcription of the pyrimidine nucleotide (pyr) operon in response to exogenous pyrimidines.</text>
</comment>
<comment type="function">
    <text evidence="1">Also displays a weak uracil phosphoribosyltransferase activity which is not physiologically significant.</text>
</comment>
<comment type="catalytic activity">
    <reaction evidence="1">
        <text>UMP + diphosphate = 5-phospho-alpha-D-ribose 1-diphosphate + uracil</text>
        <dbReference type="Rhea" id="RHEA:13017"/>
        <dbReference type="ChEBI" id="CHEBI:17568"/>
        <dbReference type="ChEBI" id="CHEBI:33019"/>
        <dbReference type="ChEBI" id="CHEBI:57865"/>
        <dbReference type="ChEBI" id="CHEBI:58017"/>
        <dbReference type="EC" id="2.4.2.9"/>
    </reaction>
</comment>
<comment type="similarity">
    <text evidence="1">Belongs to the purine/pyrimidine phosphoribosyltransferase family. PyrR subfamily.</text>
</comment>
<proteinExistence type="inferred from homology"/>
<reference key="1">
    <citation type="journal article" date="2011" name="Stand. Genomic Sci.">
        <title>Complete genome sequence of the filamentous gliding predatory bacterium Herpetosiphon aurantiacus type strain (114-95(T)).</title>
        <authorList>
            <person name="Kiss H."/>
            <person name="Nett M."/>
            <person name="Domin N."/>
            <person name="Martin K."/>
            <person name="Maresca J.A."/>
            <person name="Copeland A."/>
            <person name="Lapidus A."/>
            <person name="Lucas S."/>
            <person name="Berry K.W."/>
            <person name="Glavina Del Rio T."/>
            <person name="Dalin E."/>
            <person name="Tice H."/>
            <person name="Pitluck S."/>
            <person name="Richardson P."/>
            <person name="Bruce D."/>
            <person name="Goodwin L."/>
            <person name="Han C."/>
            <person name="Detter J.C."/>
            <person name="Schmutz J."/>
            <person name="Brettin T."/>
            <person name="Land M."/>
            <person name="Hauser L."/>
            <person name="Kyrpides N.C."/>
            <person name="Ivanova N."/>
            <person name="Goeker M."/>
            <person name="Woyke T."/>
            <person name="Klenk H.P."/>
            <person name="Bryant D.A."/>
        </authorList>
    </citation>
    <scope>NUCLEOTIDE SEQUENCE [LARGE SCALE GENOMIC DNA]</scope>
    <source>
        <strain>ATCC 23779 / DSM 785 / 114-95</strain>
    </source>
</reference>
<keyword id="KW-0328">Glycosyltransferase</keyword>
<keyword id="KW-0804">Transcription</keyword>
<keyword id="KW-0805">Transcription regulation</keyword>
<keyword id="KW-0808">Transferase</keyword>
<sequence>MTPKQLMNDEEIRRALKRIAHEIVERNAGANLVSLVGIHRRGVPLARRLAAMIAETEHVQVPVGELDIGLYRDDLHSRGPAPILGRTILPELGKRVVVLVDDVLYTGRTIRAALNELSDWGRPSAIQLAVLVDRGHRELPIRADFVGKNIPTAKNERVDVQLSEIDAAQDSVVIVQED</sequence>
<feature type="chain" id="PRO_1000164848" description="Bifunctional protein PyrR">
    <location>
        <begin position="1"/>
        <end position="178"/>
    </location>
</feature>
<feature type="short sequence motif" description="PRPP-binding" evidence="1">
    <location>
        <begin position="97"/>
        <end position="109"/>
    </location>
</feature>